<feature type="chain" id="PRO_0000133646" description="Probable WRKY transcription factor 3">
    <location>
        <begin position="1"/>
        <end position="513"/>
    </location>
</feature>
<feature type="DNA-binding region" description="WRKY 1" evidence="2">
    <location>
        <begin position="244"/>
        <end position="308"/>
    </location>
</feature>
<feature type="DNA-binding region" description="WRKY 2" evidence="2">
    <location>
        <begin position="409"/>
        <end position="474"/>
    </location>
</feature>
<feature type="region of interest" description="Disordered" evidence="3">
    <location>
        <begin position="1"/>
        <end position="26"/>
    </location>
</feature>
<feature type="region of interest" description="Disordered" evidence="3">
    <location>
        <begin position="175"/>
        <end position="281"/>
    </location>
</feature>
<feature type="region of interest" description="Disordered" evidence="3">
    <location>
        <begin position="297"/>
        <end position="394"/>
    </location>
</feature>
<feature type="compositionally biased region" description="Basic and acidic residues" evidence="3">
    <location>
        <begin position="1"/>
        <end position="11"/>
    </location>
</feature>
<feature type="compositionally biased region" description="Low complexity" evidence="3">
    <location>
        <begin position="179"/>
        <end position="201"/>
    </location>
</feature>
<feature type="compositionally biased region" description="Polar residues" evidence="3">
    <location>
        <begin position="202"/>
        <end position="228"/>
    </location>
</feature>
<feature type="compositionally biased region" description="Basic and acidic residues" evidence="3">
    <location>
        <begin position="229"/>
        <end position="240"/>
    </location>
</feature>
<feature type="compositionally biased region" description="Polar residues" evidence="3">
    <location>
        <begin position="311"/>
        <end position="335"/>
    </location>
</feature>
<feature type="compositionally biased region" description="Polar residues" evidence="3">
    <location>
        <begin position="343"/>
        <end position="355"/>
    </location>
</feature>
<feature type="compositionally biased region" description="Basic and acidic residues" evidence="3">
    <location>
        <begin position="368"/>
        <end position="387"/>
    </location>
</feature>
<comment type="function">
    <text evidence="1">Transcription factor. Interacts specifically with the W box (5'-(T)TGAC[CT]-3'), a frequently occurring elicitor-responsive cis-acting element (By similarity).</text>
</comment>
<comment type="subcellular location">
    <subcellularLocation>
        <location evidence="6">Nucleus</location>
    </subcellularLocation>
</comment>
<comment type="tissue specificity">
    <text evidence="5">In young, mature and senescent leaves.</text>
</comment>
<comment type="induction">
    <text evidence="4 5">By salicylic acid and during leaf senescence.</text>
</comment>
<reference key="1">
    <citation type="journal article" date="2001" name="Plant Cell">
        <title>Evidence for an important role of WRKY DNA binding proteins in the regulation of NPR1 gene expression.</title>
        <authorList>
            <person name="Yu D."/>
            <person name="Chen C."/>
            <person name="Chen Z."/>
        </authorList>
    </citation>
    <scope>NUCLEOTIDE SEQUENCE</scope>
    <scope>INDUCTION</scope>
</reference>
<reference key="2">
    <citation type="journal article" date="1999" name="Nature">
        <title>Sequence and analysis of chromosome 2 of the plant Arabidopsis thaliana.</title>
        <authorList>
            <person name="Lin X."/>
            <person name="Kaul S."/>
            <person name="Rounsley S.D."/>
            <person name="Shea T.P."/>
            <person name="Benito M.-I."/>
            <person name="Town C.D."/>
            <person name="Fujii C.Y."/>
            <person name="Mason T.M."/>
            <person name="Bowman C.L."/>
            <person name="Barnstead M.E."/>
            <person name="Feldblyum T.V."/>
            <person name="Buell C.R."/>
            <person name="Ketchum K.A."/>
            <person name="Lee J.J."/>
            <person name="Ronning C.M."/>
            <person name="Koo H.L."/>
            <person name="Moffat K.S."/>
            <person name="Cronin L.A."/>
            <person name="Shen M."/>
            <person name="Pai G."/>
            <person name="Van Aken S."/>
            <person name="Umayam L."/>
            <person name="Tallon L.J."/>
            <person name="Gill J.E."/>
            <person name="Adams M.D."/>
            <person name="Carrera A.J."/>
            <person name="Creasy T.H."/>
            <person name="Goodman H.M."/>
            <person name="Somerville C.R."/>
            <person name="Copenhaver G.P."/>
            <person name="Preuss D."/>
            <person name="Nierman W.C."/>
            <person name="White O."/>
            <person name="Eisen J.A."/>
            <person name="Salzberg S.L."/>
            <person name="Fraser C.M."/>
            <person name="Venter J.C."/>
        </authorList>
    </citation>
    <scope>NUCLEOTIDE SEQUENCE [LARGE SCALE GENOMIC DNA]</scope>
    <source>
        <strain>cv. Columbia</strain>
    </source>
</reference>
<reference key="3">
    <citation type="journal article" date="2017" name="Plant J.">
        <title>Araport11: a complete reannotation of the Arabidopsis thaliana reference genome.</title>
        <authorList>
            <person name="Cheng C.Y."/>
            <person name="Krishnakumar V."/>
            <person name="Chan A.P."/>
            <person name="Thibaud-Nissen F."/>
            <person name="Schobel S."/>
            <person name="Town C.D."/>
        </authorList>
    </citation>
    <scope>GENOME REANNOTATION</scope>
    <source>
        <strain>cv. Columbia</strain>
    </source>
</reference>
<reference key="4">
    <citation type="journal article" date="2001" name="Plant J.">
        <title>A new member of the Arabidopsis WRKY transcription factor family, AtWRKY6, is associated with both senescence- and defence-related processes.</title>
        <authorList>
            <person name="Robatzek S."/>
            <person name="Somssich I.E."/>
        </authorList>
    </citation>
    <scope>TISSUE SPECIFICITY</scope>
    <scope>INDUCTION</scope>
</reference>
<protein>
    <recommendedName>
        <fullName>Probable WRKY transcription factor 3</fullName>
    </recommendedName>
    <alternativeName>
        <fullName>WRKY DNA-binding protein 3</fullName>
    </alternativeName>
</protein>
<accession>Q9ZQ70</accession>
<proteinExistence type="evidence at transcript level"/>
<evidence type="ECO:0000250" key="1"/>
<evidence type="ECO:0000255" key="2">
    <source>
        <dbReference type="PROSITE-ProRule" id="PRU00223"/>
    </source>
</evidence>
<evidence type="ECO:0000256" key="3">
    <source>
        <dbReference type="SAM" id="MobiDB-lite"/>
    </source>
</evidence>
<evidence type="ECO:0000269" key="4">
    <source>
    </source>
</evidence>
<evidence type="ECO:0000269" key="5">
    <source>
    </source>
</evidence>
<evidence type="ECO:0000305" key="6"/>
<sequence>MAEKEEKEPSKLKSSTGVSRPTISLPPRPFGEMFFSGGVGFSPGPMTLVSNLFSDPDEFKSFSQLLAGAMASPAAAAVAAAAVVATAHHQTPVSSVGDGGGSGGDVDPRFKQSRPTGLMITQPPGMFTVPPGLSPATLLDSPSFFGLFSPLQGTFGMTHQQALAQVTAQAVQGNNVHMQQSQQSEYPSSTQQQQQQQQQASLTEIPSFSSAPRSQIRASVQETSQGQRETSEISVFEHRSQPQNADKPADDGYNWRKYGQKQVKGSDFPRSYYKCTHPACPVKKKVERSLDGQVTEIIYKGQHNHELPQKRGNNNGSCKSSDIANQFQTSNSSLNKSKRDQETSQVTTTEQMSEASDSEEVGNAETSVGERHEDEPDPKRRNTEVRVSEPVASSHRTVTEPRIIVQTTSEVDLLDDGYRWRKYGQKVVKGNPYPRSYYKCTTPDCGVRKHVERAATDPKAVVTTYEGKHNHDVPAARTSSHQLRPNNQHNTSTVNFNHQQPVARLRLKEEQIT</sequence>
<organism>
    <name type="scientific">Arabidopsis thaliana</name>
    <name type="common">Mouse-ear cress</name>
    <dbReference type="NCBI Taxonomy" id="3702"/>
    <lineage>
        <taxon>Eukaryota</taxon>
        <taxon>Viridiplantae</taxon>
        <taxon>Streptophyta</taxon>
        <taxon>Embryophyta</taxon>
        <taxon>Tracheophyta</taxon>
        <taxon>Spermatophyta</taxon>
        <taxon>Magnoliopsida</taxon>
        <taxon>eudicotyledons</taxon>
        <taxon>Gunneridae</taxon>
        <taxon>Pentapetalae</taxon>
        <taxon>rosids</taxon>
        <taxon>malvids</taxon>
        <taxon>Brassicales</taxon>
        <taxon>Brassicaceae</taxon>
        <taxon>Camelineae</taxon>
        <taxon>Arabidopsis</taxon>
    </lineage>
</organism>
<dbReference type="EMBL" id="AF224701">
    <property type="protein sequence ID" value="AAK28311.1"/>
    <property type="molecule type" value="mRNA"/>
</dbReference>
<dbReference type="EMBL" id="AC006284">
    <property type="protein sequence ID" value="AAD17441.1"/>
    <property type="molecule type" value="Genomic_DNA"/>
</dbReference>
<dbReference type="EMBL" id="CP002685">
    <property type="protein sequence ID" value="AEC05689.1"/>
    <property type="molecule type" value="Genomic_DNA"/>
</dbReference>
<dbReference type="PIR" id="C84447">
    <property type="entry name" value="C84447"/>
</dbReference>
<dbReference type="RefSeq" id="NP_178433.1">
    <property type="nucleotide sequence ID" value="NM_126385.4"/>
</dbReference>
<dbReference type="SMR" id="Q9ZQ70"/>
<dbReference type="BioGRID" id="265">
    <property type="interactions" value="3"/>
</dbReference>
<dbReference type="FunCoup" id="Q9ZQ70">
    <property type="interactions" value="1060"/>
</dbReference>
<dbReference type="IntAct" id="Q9ZQ70">
    <property type="interactions" value="1"/>
</dbReference>
<dbReference type="STRING" id="3702.Q9ZQ70"/>
<dbReference type="iPTMnet" id="Q9ZQ70"/>
<dbReference type="PaxDb" id="3702-AT2G03340.1"/>
<dbReference type="ProteomicsDB" id="246483"/>
<dbReference type="EnsemblPlants" id="AT2G03340.1">
    <property type="protein sequence ID" value="AT2G03340.1"/>
    <property type="gene ID" value="AT2G03340"/>
</dbReference>
<dbReference type="GeneID" id="814863"/>
<dbReference type="Gramene" id="AT2G03340.1">
    <property type="protein sequence ID" value="AT2G03340.1"/>
    <property type="gene ID" value="AT2G03340"/>
</dbReference>
<dbReference type="KEGG" id="ath:AT2G03340"/>
<dbReference type="Araport" id="AT2G03340"/>
<dbReference type="TAIR" id="AT2G03340">
    <property type="gene designation" value="WRKY3"/>
</dbReference>
<dbReference type="eggNOG" id="ENOG502QTWW">
    <property type="taxonomic scope" value="Eukaryota"/>
</dbReference>
<dbReference type="HOGENOM" id="CLU_012086_7_0_1"/>
<dbReference type="InParanoid" id="Q9ZQ70"/>
<dbReference type="OMA" id="HRMFDHT"/>
<dbReference type="PhylomeDB" id="Q9ZQ70"/>
<dbReference type="PRO" id="PR:Q9ZQ70"/>
<dbReference type="Proteomes" id="UP000006548">
    <property type="component" value="Chromosome 2"/>
</dbReference>
<dbReference type="ExpressionAtlas" id="Q9ZQ70">
    <property type="expression patterns" value="baseline and differential"/>
</dbReference>
<dbReference type="GO" id="GO:0005634">
    <property type="term" value="C:nucleus"/>
    <property type="evidence" value="ECO:0007669"/>
    <property type="project" value="UniProtKB-SubCell"/>
</dbReference>
<dbReference type="GO" id="GO:0003700">
    <property type="term" value="F:DNA-binding transcription factor activity"/>
    <property type="evidence" value="ECO:0000250"/>
    <property type="project" value="TAIR"/>
</dbReference>
<dbReference type="GO" id="GO:0000976">
    <property type="term" value="F:transcription cis-regulatory region binding"/>
    <property type="evidence" value="ECO:0000353"/>
    <property type="project" value="TAIR"/>
</dbReference>
<dbReference type="FunFam" id="2.20.25.80:FF:000006">
    <property type="entry name" value="WRKY transcription factor"/>
    <property type="match status" value="1"/>
</dbReference>
<dbReference type="FunFam" id="2.20.25.80:FF:000001">
    <property type="entry name" value="WRKY transcription factor 33"/>
    <property type="match status" value="1"/>
</dbReference>
<dbReference type="Gene3D" id="2.20.25.80">
    <property type="entry name" value="WRKY domain"/>
    <property type="match status" value="2"/>
</dbReference>
<dbReference type="InterPro" id="IPR003657">
    <property type="entry name" value="WRKY_dom"/>
</dbReference>
<dbReference type="InterPro" id="IPR036576">
    <property type="entry name" value="WRKY_dom_sf"/>
</dbReference>
<dbReference type="InterPro" id="IPR044810">
    <property type="entry name" value="WRKY_plant"/>
</dbReference>
<dbReference type="PANTHER" id="PTHR31221:SF130">
    <property type="entry name" value="WRKY TRANSCRIPTION FACTOR 3-RELATED"/>
    <property type="match status" value="1"/>
</dbReference>
<dbReference type="PANTHER" id="PTHR31221">
    <property type="entry name" value="WRKY TRANSCRIPTION FACTOR PROTEIN 1-RELATED"/>
    <property type="match status" value="1"/>
</dbReference>
<dbReference type="Pfam" id="PF03106">
    <property type="entry name" value="WRKY"/>
    <property type="match status" value="2"/>
</dbReference>
<dbReference type="SMART" id="SM00774">
    <property type="entry name" value="WRKY"/>
    <property type="match status" value="2"/>
</dbReference>
<dbReference type="SUPFAM" id="SSF118290">
    <property type="entry name" value="WRKY DNA-binding domain"/>
    <property type="match status" value="2"/>
</dbReference>
<dbReference type="PROSITE" id="PS50811">
    <property type="entry name" value="WRKY"/>
    <property type="match status" value="2"/>
</dbReference>
<gene>
    <name type="primary">WRKY3</name>
    <name type="ordered locus">At2g03340</name>
    <name type="ORF">T4M8.23</name>
</gene>
<name>WRKY3_ARATH</name>
<keyword id="KW-0238">DNA-binding</keyword>
<keyword id="KW-0539">Nucleus</keyword>
<keyword id="KW-1185">Reference proteome</keyword>
<keyword id="KW-0677">Repeat</keyword>
<keyword id="KW-0804">Transcription</keyword>
<keyword id="KW-0805">Transcription regulation</keyword>